<name>DCUP_BRUA1</name>
<proteinExistence type="inferred from homology"/>
<protein>
    <recommendedName>
        <fullName evidence="1">Uroporphyrinogen decarboxylase</fullName>
        <shortName evidence="1">UPD</shortName>
        <shortName evidence="1">URO-D</shortName>
        <ecNumber evidence="1">4.1.1.37</ecNumber>
    </recommendedName>
</protein>
<accession>B2S965</accession>
<evidence type="ECO:0000255" key="1">
    <source>
        <dbReference type="HAMAP-Rule" id="MF_00218"/>
    </source>
</evidence>
<dbReference type="EC" id="4.1.1.37" evidence="1"/>
<dbReference type="EMBL" id="CP000887">
    <property type="protein sequence ID" value="ACD73417.1"/>
    <property type="molecule type" value="Genomic_DNA"/>
</dbReference>
<dbReference type="RefSeq" id="WP_002965130.1">
    <property type="nucleotide sequence ID" value="NC_010742.1"/>
</dbReference>
<dbReference type="SMR" id="B2S965"/>
<dbReference type="GeneID" id="93017623"/>
<dbReference type="KEGG" id="bmc:BAbS19_I19350"/>
<dbReference type="HOGENOM" id="CLU_040933_0_0_5"/>
<dbReference type="UniPathway" id="UPA00251">
    <property type="reaction ID" value="UER00321"/>
</dbReference>
<dbReference type="Proteomes" id="UP000002565">
    <property type="component" value="Chromosome 1"/>
</dbReference>
<dbReference type="GO" id="GO:0005829">
    <property type="term" value="C:cytosol"/>
    <property type="evidence" value="ECO:0007669"/>
    <property type="project" value="TreeGrafter"/>
</dbReference>
<dbReference type="GO" id="GO:0004853">
    <property type="term" value="F:uroporphyrinogen decarboxylase activity"/>
    <property type="evidence" value="ECO:0007669"/>
    <property type="project" value="UniProtKB-UniRule"/>
</dbReference>
<dbReference type="GO" id="GO:0019353">
    <property type="term" value="P:protoporphyrinogen IX biosynthetic process from glutamate"/>
    <property type="evidence" value="ECO:0007669"/>
    <property type="project" value="TreeGrafter"/>
</dbReference>
<dbReference type="CDD" id="cd00717">
    <property type="entry name" value="URO-D"/>
    <property type="match status" value="1"/>
</dbReference>
<dbReference type="FunFam" id="3.20.20.210:FF:000007">
    <property type="entry name" value="Uroporphyrinogen decarboxylase"/>
    <property type="match status" value="1"/>
</dbReference>
<dbReference type="Gene3D" id="3.20.20.210">
    <property type="match status" value="1"/>
</dbReference>
<dbReference type="HAMAP" id="MF_00218">
    <property type="entry name" value="URO_D"/>
    <property type="match status" value="1"/>
</dbReference>
<dbReference type="InterPro" id="IPR038071">
    <property type="entry name" value="UROD/MetE-like_sf"/>
</dbReference>
<dbReference type="InterPro" id="IPR006361">
    <property type="entry name" value="Uroporphyrinogen_deCO2ase_HemE"/>
</dbReference>
<dbReference type="InterPro" id="IPR000257">
    <property type="entry name" value="Uroporphyrinogen_deCOase"/>
</dbReference>
<dbReference type="NCBIfam" id="TIGR01464">
    <property type="entry name" value="hemE"/>
    <property type="match status" value="1"/>
</dbReference>
<dbReference type="PANTHER" id="PTHR21091">
    <property type="entry name" value="METHYLTETRAHYDROFOLATE:HOMOCYSTEINE METHYLTRANSFERASE RELATED"/>
    <property type="match status" value="1"/>
</dbReference>
<dbReference type="PANTHER" id="PTHR21091:SF169">
    <property type="entry name" value="UROPORPHYRINOGEN DECARBOXYLASE"/>
    <property type="match status" value="1"/>
</dbReference>
<dbReference type="Pfam" id="PF01208">
    <property type="entry name" value="URO-D"/>
    <property type="match status" value="1"/>
</dbReference>
<dbReference type="SUPFAM" id="SSF51726">
    <property type="entry name" value="UROD/MetE-like"/>
    <property type="match status" value="1"/>
</dbReference>
<dbReference type="PROSITE" id="PS00906">
    <property type="entry name" value="UROD_1"/>
    <property type="match status" value="1"/>
</dbReference>
<dbReference type="PROSITE" id="PS00907">
    <property type="entry name" value="UROD_2"/>
    <property type="match status" value="1"/>
</dbReference>
<feature type="chain" id="PRO_1000099975" description="Uroporphyrinogen decarboxylase">
    <location>
        <begin position="1"/>
        <end position="341"/>
    </location>
</feature>
<feature type="binding site" evidence="1">
    <location>
        <begin position="23"/>
        <end position="27"/>
    </location>
    <ligand>
        <name>substrate</name>
    </ligand>
</feature>
<feature type="binding site" evidence="1">
    <location>
        <position position="73"/>
    </location>
    <ligand>
        <name>substrate</name>
    </ligand>
</feature>
<feature type="binding site" evidence="1">
    <location>
        <position position="148"/>
    </location>
    <ligand>
        <name>substrate</name>
    </ligand>
</feature>
<feature type="binding site" evidence="1">
    <location>
        <position position="203"/>
    </location>
    <ligand>
        <name>substrate</name>
    </ligand>
</feature>
<feature type="binding site" evidence="1">
    <location>
        <position position="318"/>
    </location>
    <ligand>
        <name>substrate</name>
    </ligand>
</feature>
<feature type="site" description="Transition state stabilizer" evidence="1">
    <location>
        <position position="73"/>
    </location>
</feature>
<keyword id="KW-0963">Cytoplasm</keyword>
<keyword id="KW-0210">Decarboxylase</keyword>
<keyword id="KW-0456">Lyase</keyword>
<keyword id="KW-0627">Porphyrin biosynthesis</keyword>
<gene>
    <name evidence="1" type="primary">hemE</name>
    <name type="ordered locus">BAbS19_I19350</name>
</gene>
<sequence length="341" mass="37831">MNRKVLKVIDGETVFPPPIWMMRQAGRYLPEYRETRKKAGSFLDLCYSPDLAVEVTLQPIRRFGFDAAILFSDILVVPHALGRDLRFEEGKGPLMTPIDADEIFWLETEGVAKRLEPVYETVRLVREQLPDETTLLGFCGAPWTVATYMIAGHGTPDQAPARLFAYRFPEAFEKLLNDLADVSAEYLIEQLGAGADAVQIFDSWSGVLDEDCFERFCIRPVARIVQKVRAVYPQARIIGFPKGAGMLYAGYREKTGVDMLGLDWSVPLSFAALLQEEGAVQGNLDPLRVVAGGNALDEGVDAILERMGQGPLVFNLGHGITPQAPIENVQRMIDRVRGGKS</sequence>
<comment type="function">
    <text evidence="1">Catalyzes the decarboxylation of four acetate groups of uroporphyrinogen-III to yield coproporphyrinogen-III.</text>
</comment>
<comment type="catalytic activity">
    <reaction evidence="1">
        <text>uroporphyrinogen III + 4 H(+) = coproporphyrinogen III + 4 CO2</text>
        <dbReference type="Rhea" id="RHEA:19865"/>
        <dbReference type="ChEBI" id="CHEBI:15378"/>
        <dbReference type="ChEBI" id="CHEBI:16526"/>
        <dbReference type="ChEBI" id="CHEBI:57308"/>
        <dbReference type="ChEBI" id="CHEBI:57309"/>
        <dbReference type="EC" id="4.1.1.37"/>
    </reaction>
</comment>
<comment type="pathway">
    <text evidence="1">Porphyrin-containing compound metabolism; protoporphyrin-IX biosynthesis; coproporphyrinogen-III from 5-aminolevulinate: step 4/4.</text>
</comment>
<comment type="subunit">
    <text evidence="1">Homodimer.</text>
</comment>
<comment type="subcellular location">
    <subcellularLocation>
        <location evidence="1">Cytoplasm</location>
    </subcellularLocation>
</comment>
<comment type="similarity">
    <text evidence="1">Belongs to the uroporphyrinogen decarboxylase family.</text>
</comment>
<organism>
    <name type="scientific">Brucella abortus (strain S19)</name>
    <dbReference type="NCBI Taxonomy" id="430066"/>
    <lineage>
        <taxon>Bacteria</taxon>
        <taxon>Pseudomonadati</taxon>
        <taxon>Pseudomonadota</taxon>
        <taxon>Alphaproteobacteria</taxon>
        <taxon>Hyphomicrobiales</taxon>
        <taxon>Brucellaceae</taxon>
        <taxon>Brucella/Ochrobactrum group</taxon>
        <taxon>Brucella</taxon>
    </lineage>
</organism>
<reference key="1">
    <citation type="journal article" date="2008" name="PLoS ONE">
        <title>Genome sequence of Brucella abortus vaccine strain S19 compared to virulent strains yields candidate virulence genes.</title>
        <authorList>
            <person name="Crasta O.R."/>
            <person name="Folkerts O."/>
            <person name="Fei Z."/>
            <person name="Mane S.P."/>
            <person name="Evans C."/>
            <person name="Martino-Catt S."/>
            <person name="Bricker B."/>
            <person name="Yu G."/>
            <person name="Du L."/>
            <person name="Sobral B.W."/>
        </authorList>
    </citation>
    <scope>NUCLEOTIDE SEQUENCE [LARGE SCALE GENOMIC DNA]</scope>
    <source>
        <strain>S19</strain>
    </source>
</reference>